<dbReference type="EMBL" id="Z80360">
    <property type="protein sequence ID" value="CAB02514.1"/>
    <property type="molecule type" value="Genomic_DNA"/>
</dbReference>
<dbReference type="EMBL" id="AL009126">
    <property type="protein sequence ID" value="CAB15779.1"/>
    <property type="molecule type" value="Genomic_DNA"/>
</dbReference>
<dbReference type="PIR" id="E70057">
    <property type="entry name" value="E70057"/>
</dbReference>
<dbReference type="RefSeq" id="NP_391632.1">
    <property type="nucleotide sequence ID" value="NC_000964.3"/>
</dbReference>
<dbReference type="RefSeq" id="WP_003244446.1">
    <property type="nucleotide sequence ID" value="NZ_OZ025638.1"/>
</dbReference>
<dbReference type="FunCoup" id="P70996">
    <property type="interactions" value="43"/>
</dbReference>
<dbReference type="STRING" id="224308.BSU37520"/>
<dbReference type="PaxDb" id="224308-BSU37520"/>
<dbReference type="EnsemblBacteria" id="CAB15779">
    <property type="protein sequence ID" value="CAB15779"/>
    <property type="gene ID" value="BSU_37520"/>
</dbReference>
<dbReference type="GeneID" id="937100"/>
<dbReference type="KEGG" id="bsu:BSU37520"/>
<dbReference type="PATRIC" id="fig|224308.179.peg.4063"/>
<dbReference type="eggNOG" id="ENOG502Z8XT">
    <property type="taxonomic scope" value="Bacteria"/>
</dbReference>
<dbReference type="InParanoid" id="P70996"/>
<dbReference type="OrthoDB" id="2374547at2"/>
<dbReference type="PhylomeDB" id="P70996"/>
<dbReference type="BioCyc" id="BSUB:BSU37520-MONOMER"/>
<dbReference type="Proteomes" id="UP000001570">
    <property type="component" value="Chromosome"/>
</dbReference>
<dbReference type="InterPro" id="IPR014852">
    <property type="entry name" value="YwhD"/>
</dbReference>
<dbReference type="Pfam" id="PF08741">
    <property type="entry name" value="YwhD"/>
    <property type="match status" value="1"/>
</dbReference>
<gene>
    <name type="primary">ywhD</name>
    <name type="ordered locus">BSU37520</name>
</gene>
<protein>
    <recommendedName>
        <fullName>Uncharacterized protein YwhD</fullName>
    </recommendedName>
</protein>
<feature type="chain" id="PRO_0000359920" description="Uncharacterized protein YwhD">
    <location>
        <begin position="1"/>
        <end position="172"/>
    </location>
</feature>
<name>YWHD_BACSU</name>
<proteinExistence type="predicted"/>
<organism>
    <name type="scientific">Bacillus subtilis (strain 168)</name>
    <dbReference type="NCBI Taxonomy" id="224308"/>
    <lineage>
        <taxon>Bacteria</taxon>
        <taxon>Bacillati</taxon>
        <taxon>Bacillota</taxon>
        <taxon>Bacilli</taxon>
        <taxon>Bacillales</taxon>
        <taxon>Bacillaceae</taxon>
        <taxon>Bacillus</taxon>
    </lineage>
</organism>
<sequence length="172" mass="19457">MEEKKKKSIGFNIIKSDPTDGHGGFGVGALSLDNISPVFVDVEEKEAFVDIGAMHARSTVEKGIKFLPNKEEVPNGKPYWLVWVTIDRKEEGPYYAGVTACEMTVDRSIRRGYKSLPEHVNLMDKSMKRKIIVDKMDDSSKRVLGEFLKKHDQGLWDRSSDELKTSLLPENN</sequence>
<accession>P70996</accession>
<accession>Q794Z0</accession>
<reference key="1">
    <citation type="journal article" date="1997" name="Microbiology">
        <title>The Bacillus subtilis genome from gerBC (311 degrees) to licR (334 degrees).</title>
        <authorList>
            <person name="Presecan E."/>
            <person name="Moszer I."/>
            <person name="Boursier L."/>
            <person name="Cruz Ramos H."/>
            <person name="De La Fuente V."/>
            <person name="Hullo M.-F."/>
            <person name="Lelong C."/>
            <person name="Schleich S."/>
            <person name="Sekowska A."/>
            <person name="Song B.H."/>
            <person name="Villani G."/>
            <person name="Kunst F."/>
            <person name="Danchin A."/>
            <person name="Glaser P."/>
        </authorList>
    </citation>
    <scope>NUCLEOTIDE SEQUENCE [GENOMIC DNA]</scope>
    <source>
        <strain>168</strain>
    </source>
</reference>
<reference key="2">
    <citation type="journal article" date="1997" name="Nature">
        <title>The complete genome sequence of the Gram-positive bacterium Bacillus subtilis.</title>
        <authorList>
            <person name="Kunst F."/>
            <person name="Ogasawara N."/>
            <person name="Moszer I."/>
            <person name="Albertini A.M."/>
            <person name="Alloni G."/>
            <person name="Azevedo V."/>
            <person name="Bertero M.G."/>
            <person name="Bessieres P."/>
            <person name="Bolotin A."/>
            <person name="Borchert S."/>
            <person name="Borriss R."/>
            <person name="Boursier L."/>
            <person name="Brans A."/>
            <person name="Braun M."/>
            <person name="Brignell S.C."/>
            <person name="Bron S."/>
            <person name="Brouillet S."/>
            <person name="Bruschi C.V."/>
            <person name="Caldwell B."/>
            <person name="Capuano V."/>
            <person name="Carter N.M."/>
            <person name="Choi S.-K."/>
            <person name="Codani J.-J."/>
            <person name="Connerton I.F."/>
            <person name="Cummings N.J."/>
            <person name="Daniel R.A."/>
            <person name="Denizot F."/>
            <person name="Devine K.M."/>
            <person name="Duesterhoeft A."/>
            <person name="Ehrlich S.D."/>
            <person name="Emmerson P.T."/>
            <person name="Entian K.-D."/>
            <person name="Errington J."/>
            <person name="Fabret C."/>
            <person name="Ferrari E."/>
            <person name="Foulger D."/>
            <person name="Fritz C."/>
            <person name="Fujita M."/>
            <person name="Fujita Y."/>
            <person name="Fuma S."/>
            <person name="Galizzi A."/>
            <person name="Galleron N."/>
            <person name="Ghim S.-Y."/>
            <person name="Glaser P."/>
            <person name="Goffeau A."/>
            <person name="Golightly E.J."/>
            <person name="Grandi G."/>
            <person name="Guiseppi G."/>
            <person name="Guy B.J."/>
            <person name="Haga K."/>
            <person name="Haiech J."/>
            <person name="Harwood C.R."/>
            <person name="Henaut A."/>
            <person name="Hilbert H."/>
            <person name="Holsappel S."/>
            <person name="Hosono S."/>
            <person name="Hullo M.-F."/>
            <person name="Itaya M."/>
            <person name="Jones L.-M."/>
            <person name="Joris B."/>
            <person name="Karamata D."/>
            <person name="Kasahara Y."/>
            <person name="Klaerr-Blanchard M."/>
            <person name="Klein C."/>
            <person name="Kobayashi Y."/>
            <person name="Koetter P."/>
            <person name="Koningstein G."/>
            <person name="Krogh S."/>
            <person name="Kumano M."/>
            <person name="Kurita K."/>
            <person name="Lapidus A."/>
            <person name="Lardinois S."/>
            <person name="Lauber J."/>
            <person name="Lazarevic V."/>
            <person name="Lee S.-M."/>
            <person name="Levine A."/>
            <person name="Liu H."/>
            <person name="Masuda S."/>
            <person name="Mauel C."/>
            <person name="Medigue C."/>
            <person name="Medina N."/>
            <person name="Mellado R.P."/>
            <person name="Mizuno M."/>
            <person name="Moestl D."/>
            <person name="Nakai S."/>
            <person name="Noback M."/>
            <person name="Noone D."/>
            <person name="O'Reilly M."/>
            <person name="Ogawa K."/>
            <person name="Ogiwara A."/>
            <person name="Oudega B."/>
            <person name="Park S.-H."/>
            <person name="Parro V."/>
            <person name="Pohl T.M."/>
            <person name="Portetelle D."/>
            <person name="Porwollik S."/>
            <person name="Prescott A.M."/>
            <person name="Presecan E."/>
            <person name="Pujic P."/>
            <person name="Purnelle B."/>
            <person name="Rapoport G."/>
            <person name="Rey M."/>
            <person name="Reynolds S."/>
            <person name="Rieger M."/>
            <person name="Rivolta C."/>
            <person name="Rocha E."/>
            <person name="Roche B."/>
            <person name="Rose M."/>
            <person name="Sadaie Y."/>
            <person name="Sato T."/>
            <person name="Scanlan E."/>
            <person name="Schleich S."/>
            <person name="Schroeter R."/>
            <person name="Scoffone F."/>
            <person name="Sekiguchi J."/>
            <person name="Sekowska A."/>
            <person name="Seror S.J."/>
            <person name="Serror P."/>
            <person name="Shin B.-S."/>
            <person name="Soldo B."/>
            <person name="Sorokin A."/>
            <person name="Tacconi E."/>
            <person name="Takagi T."/>
            <person name="Takahashi H."/>
            <person name="Takemaru K."/>
            <person name="Takeuchi M."/>
            <person name="Tamakoshi A."/>
            <person name="Tanaka T."/>
            <person name="Terpstra P."/>
            <person name="Tognoni A."/>
            <person name="Tosato V."/>
            <person name="Uchiyama S."/>
            <person name="Vandenbol M."/>
            <person name="Vannier F."/>
            <person name="Vassarotti A."/>
            <person name="Viari A."/>
            <person name="Wambutt R."/>
            <person name="Wedler E."/>
            <person name="Wedler H."/>
            <person name="Weitzenegger T."/>
            <person name="Winters P."/>
            <person name="Wipat A."/>
            <person name="Yamamoto H."/>
            <person name="Yamane K."/>
            <person name="Yasumoto K."/>
            <person name="Yata K."/>
            <person name="Yoshida K."/>
            <person name="Yoshikawa H.-F."/>
            <person name="Zumstein E."/>
            <person name="Yoshikawa H."/>
            <person name="Danchin A."/>
        </authorList>
    </citation>
    <scope>NUCLEOTIDE SEQUENCE [LARGE SCALE GENOMIC DNA]</scope>
    <source>
        <strain>168</strain>
    </source>
</reference>
<keyword id="KW-1185">Reference proteome</keyword>